<organism>
    <name type="scientific">Homo sapiens</name>
    <name type="common">Human</name>
    <dbReference type="NCBI Taxonomy" id="9606"/>
    <lineage>
        <taxon>Eukaryota</taxon>
        <taxon>Metazoa</taxon>
        <taxon>Chordata</taxon>
        <taxon>Craniata</taxon>
        <taxon>Vertebrata</taxon>
        <taxon>Euteleostomi</taxon>
        <taxon>Mammalia</taxon>
        <taxon>Eutheria</taxon>
        <taxon>Euarchontoglires</taxon>
        <taxon>Primates</taxon>
        <taxon>Haplorrhini</taxon>
        <taxon>Catarrhini</taxon>
        <taxon>Hominidae</taxon>
        <taxon>Homo</taxon>
    </lineage>
</organism>
<reference key="1">
    <citation type="journal article" date="1990" name="J. Exp. Med.">
        <title>Expression cloning of a human Fc receptor for IgA.</title>
        <authorList>
            <person name="Maliszewski C.R."/>
            <person name="March C.J."/>
            <person name="Schoenborn M.A."/>
            <person name="Gimpel S."/>
            <person name="Shen L."/>
        </authorList>
    </citation>
    <scope>NUCLEOTIDE SEQUENCE [MRNA] (ISOFORM A.1)</scope>
</reference>
<reference key="2">
    <citation type="journal article" date="1995" name="J. Immunol.">
        <title>Structure of the gene for the human myeloid IgA Fc receptor (CD89).</title>
        <authorList>
            <person name="de Wit T.P.M."/>
            <person name="Morton H.C."/>
            <person name="Capel P.J.A."/>
            <person name="van de Winkel J.G.J."/>
        </authorList>
    </citation>
    <scope>NUCLEOTIDE SEQUENCE [GENOMIC DNA] (ISOFORM A.1)</scope>
    <source>
        <tissue>Bone marrow</tissue>
    </source>
</reference>
<reference key="3">
    <citation type="journal article" date="1996" name="J. Immunol.">
        <title>Identification of Fc alpha receptor (CD89) isoforms generated by alternative splicing that are differentially expressed between blood monocytes and alveolar macrophages.</title>
        <authorList>
            <person name="Patry C."/>
            <person name="Sibille Y."/>
            <person name="Lehuen A."/>
            <person name="Monteiro R.C."/>
        </authorList>
    </citation>
    <scope>NUCLEOTIDE SEQUENCE [MRNA] (ISOFORMS A.2 AND A.3)</scope>
    <scope>TISSUE SPECIFICITY</scope>
    <source>
        <tissue>Alveolar macrophage</tissue>
        <tissue>Monocyte</tissue>
    </source>
</reference>
<reference key="4">
    <citation type="submission" date="1996-05" db="EMBL/GenBank/DDBJ databases">
        <authorList>
            <person name="van Dijk T.B."/>
            <person name="Morton H.C."/>
            <person name="Caldenhoven E."/>
            <person name="Bracke M."/>
            <person name="Raaijmakers J.A.M."/>
            <person name="Lammers J.W.J."/>
            <person name="Koenderman L."/>
            <person name="Groot R.P."/>
        </authorList>
    </citation>
    <scope>NUCLEOTIDE SEQUENCE (ISOFORMS B AND B-DELTA-S2)</scope>
</reference>
<reference key="5">
    <citation type="journal article" date="1996" name="Biochem. J.">
        <title>Alternative splicing of the human IgA Fc receptor CD89 in neutrophils and eosinophils.</title>
        <authorList>
            <person name="Pleass R.J."/>
            <person name="Andrews P.D."/>
            <person name="Kerr M.A."/>
            <person name="Woof J.M."/>
        </authorList>
    </citation>
    <scope>NUCLEOTIDE SEQUENCE [MRNA] (ISOFORM A.3)</scope>
    <scope>TISSUE SPECIFICITY</scope>
</reference>
<reference key="6">
    <citation type="journal article" date="1997" name="Clin. Exp. Immunol.">
        <title>IgA nephropathy-specific expression of the IgA Fc receptors (CD89) on blood phagocytic cells.</title>
        <authorList>
            <person name="Toyabe S."/>
            <person name="Kuwano Y."/>
            <person name="Takeda K."/>
            <person name="Uchiyama M."/>
            <person name="Abo T."/>
        </authorList>
    </citation>
    <scope>NUCLEOTIDE SEQUENCE [MRNA] (ISOFORMS A.2; A.3; L10; U02; U09; U10; U11 AND U13)</scope>
</reference>
<reference key="7">
    <citation type="journal article" date="2007" name="J. Immunol.">
        <title>Episodes of natural selection shaped the interactions of IgA-Fc with FcalphaRI and bacterial decoy proteins.</title>
        <authorList>
            <person name="Abi-Rached L."/>
            <person name="Dorighi K."/>
            <person name="Norman P.J."/>
            <person name="Yawata M."/>
            <person name="Parham P."/>
        </authorList>
    </citation>
    <scope>NUCLEOTIDE SEQUENCE [MRNA] (ISOFORM A.1)</scope>
    <scope>VARIANTS ASN-113 AND GLY-269</scope>
</reference>
<reference key="8">
    <citation type="journal article" date="2004" name="Nature">
        <title>The DNA sequence and biology of human chromosome 19.</title>
        <authorList>
            <person name="Grimwood J."/>
            <person name="Gordon L.A."/>
            <person name="Olsen A.S."/>
            <person name="Terry A."/>
            <person name="Schmutz J."/>
            <person name="Lamerdin J.E."/>
            <person name="Hellsten U."/>
            <person name="Goodstein D."/>
            <person name="Couronne O."/>
            <person name="Tran-Gyamfi M."/>
            <person name="Aerts A."/>
            <person name="Altherr M."/>
            <person name="Ashworth L."/>
            <person name="Bajorek E."/>
            <person name="Black S."/>
            <person name="Branscomb E."/>
            <person name="Caenepeel S."/>
            <person name="Carrano A.V."/>
            <person name="Caoile C."/>
            <person name="Chan Y.M."/>
            <person name="Christensen M."/>
            <person name="Cleland C.A."/>
            <person name="Copeland A."/>
            <person name="Dalin E."/>
            <person name="Dehal P."/>
            <person name="Denys M."/>
            <person name="Detter J.C."/>
            <person name="Escobar J."/>
            <person name="Flowers D."/>
            <person name="Fotopulos D."/>
            <person name="Garcia C."/>
            <person name="Georgescu A.M."/>
            <person name="Glavina T."/>
            <person name="Gomez M."/>
            <person name="Gonzales E."/>
            <person name="Groza M."/>
            <person name="Hammon N."/>
            <person name="Hawkins T."/>
            <person name="Haydu L."/>
            <person name="Ho I."/>
            <person name="Huang W."/>
            <person name="Israni S."/>
            <person name="Jett J."/>
            <person name="Kadner K."/>
            <person name="Kimball H."/>
            <person name="Kobayashi A."/>
            <person name="Larionov V."/>
            <person name="Leem S.-H."/>
            <person name="Lopez F."/>
            <person name="Lou Y."/>
            <person name="Lowry S."/>
            <person name="Malfatti S."/>
            <person name="Martinez D."/>
            <person name="McCready P.M."/>
            <person name="Medina C."/>
            <person name="Morgan J."/>
            <person name="Nelson K."/>
            <person name="Nolan M."/>
            <person name="Ovcharenko I."/>
            <person name="Pitluck S."/>
            <person name="Pollard M."/>
            <person name="Popkie A.P."/>
            <person name="Predki P."/>
            <person name="Quan G."/>
            <person name="Ramirez L."/>
            <person name="Rash S."/>
            <person name="Retterer J."/>
            <person name="Rodriguez A."/>
            <person name="Rogers S."/>
            <person name="Salamov A."/>
            <person name="Salazar A."/>
            <person name="She X."/>
            <person name="Smith D."/>
            <person name="Slezak T."/>
            <person name="Solovyev V."/>
            <person name="Thayer N."/>
            <person name="Tice H."/>
            <person name="Tsai M."/>
            <person name="Ustaszewska A."/>
            <person name="Vo N."/>
            <person name="Wagner M."/>
            <person name="Wheeler J."/>
            <person name="Wu K."/>
            <person name="Xie G."/>
            <person name="Yang J."/>
            <person name="Dubchak I."/>
            <person name="Furey T.S."/>
            <person name="DeJong P."/>
            <person name="Dickson M."/>
            <person name="Gordon D."/>
            <person name="Eichler E.E."/>
            <person name="Pennacchio L.A."/>
            <person name="Richardson P."/>
            <person name="Stubbs L."/>
            <person name="Rokhsar D.S."/>
            <person name="Myers R.M."/>
            <person name="Rubin E.M."/>
            <person name="Lucas S.M."/>
        </authorList>
    </citation>
    <scope>NUCLEOTIDE SEQUENCE [LARGE SCALE GENOMIC DNA]</scope>
</reference>
<reference key="9">
    <citation type="journal article" date="2004" name="Genome Res.">
        <title>The status, quality, and expansion of the NIH full-length cDNA project: the Mammalian Gene Collection (MGC).</title>
        <authorList>
            <consortium name="The MGC Project Team"/>
        </authorList>
    </citation>
    <scope>NUCLEOTIDE SEQUENCE [LARGE SCALE MRNA] (ISOFORM A.1)</scope>
    <source>
        <tissue>Blood</tissue>
    </source>
</reference>
<reference key="10">
    <citation type="journal article" date="1994" name="J. Immunol.">
        <title>Association of IgA-Fc receptors (Fc alpha R) with Fc epsilon RI gamma 2 subunits in U937 cells. Aggregation induces the tyrosine phosphorylation of gamma 2.</title>
        <authorList>
            <person name="Pfefferkorn L.C."/>
            <person name="Yeaman G.R."/>
        </authorList>
    </citation>
    <scope>SUBUNIT</scope>
</reference>
<reference key="11">
    <citation type="journal article" date="2004" name="Genome Biol.">
        <title>An unappreciated role for RNA surveillance.</title>
        <authorList>
            <person name="Hillman R.T."/>
            <person name="Green R.E."/>
            <person name="Brenner S.E."/>
        </authorList>
    </citation>
    <scope>SPLICE ISOFORM(S) THAT ARE POTENTIAL NMD TARGET(S)</scope>
</reference>
<reference key="12">
    <citation type="journal article" date="2007" name="Mol. Microbiol.">
        <title>The crystal structure of staphylococcal superantigen-like protein 11 in complex with sialyl Lewis X reveals the mechanism for cell binding and immune inhibition.</title>
        <authorList>
            <person name="Chung M.C."/>
            <person name="Wines B.D."/>
            <person name="Baker H."/>
            <person name="Langley R.J."/>
            <person name="Baker E.N."/>
            <person name="Fraser J.D."/>
        </authorList>
    </citation>
    <scope>INTERACTION WITH STAPHYLOCOCCUS AUREUS PROTEIN SSL11 (MICROBIAL INFECTION)</scope>
</reference>
<reference key="13">
    <citation type="journal article" date="2003" name="J. Biol. Chem.">
        <title>Crystal structure of the ectodomain of human FcalphaRI.</title>
        <authorList>
            <person name="Ding Y."/>
            <person name="Xu G."/>
            <person name="Yang M."/>
            <person name="Yao M."/>
            <person name="Gao G.F."/>
            <person name="Wang L."/>
            <person name="Zhang W."/>
            <person name="Rao Z."/>
        </authorList>
    </citation>
    <scope>X-RAY CRYSTALLOGRAPHY (2.1 ANGSTROMS) OF 21-229</scope>
    <scope>DISULFIDE BONDS</scope>
</reference>
<reference key="14">
    <citation type="journal article" date="2003" name="Nature">
        <title>Insights into IgA-mediated immune responses from the crystal structures of human FcalphaRI and its complex with IgA1-Fc.</title>
        <authorList>
            <person name="Herr A.B."/>
            <person name="Ballister E.R."/>
            <person name="Bjorkman P.J."/>
        </authorList>
    </citation>
    <scope>X-RAY CRYSTALLOGRAPHY (3.0 ANGSTROMS) OF 22-216 IN COMPLEX WITH IMMUNOGLOBULIN ALPHA</scope>
    <scope>FUNCTION</scope>
    <scope>DISULFIDE BONDS</scope>
    <scope>GLYCOSYLATION AT ASN-141 AND ASN-177</scope>
</reference>
<proteinExistence type="evidence at protein level"/>
<dbReference type="EMBL" id="X54150">
    <property type="protein sequence ID" value="CAA38089.1"/>
    <property type="molecule type" value="mRNA"/>
</dbReference>
<dbReference type="EMBL" id="X87767">
    <property type="protein sequence ID" value="CAA61039.1"/>
    <property type="molecule type" value="Genomic_DNA"/>
</dbReference>
<dbReference type="EMBL" id="X87768">
    <property type="protein sequence ID" value="CAA61039.1"/>
    <property type="status" value="JOINED"/>
    <property type="molecule type" value="Genomic_DNA"/>
</dbReference>
<dbReference type="EMBL" id="X87769">
    <property type="protein sequence ID" value="CAA61039.1"/>
    <property type="status" value="JOINED"/>
    <property type="molecule type" value="Genomic_DNA"/>
</dbReference>
<dbReference type="EMBL" id="X87766">
    <property type="protein sequence ID" value="CAA61039.1"/>
    <property type="status" value="JOINED"/>
    <property type="molecule type" value="Genomic_DNA"/>
</dbReference>
<dbReference type="EMBL" id="X87765">
    <property type="protein sequence ID" value="CAA61039.1"/>
    <property type="status" value="JOINED"/>
    <property type="molecule type" value="Genomic_DNA"/>
</dbReference>
<dbReference type="EMBL" id="U43774">
    <property type="protein sequence ID" value="AAC50639.1"/>
    <property type="molecule type" value="mRNA"/>
</dbReference>
<dbReference type="EMBL" id="U43677">
    <property type="protein sequence ID" value="AAC50595.1"/>
    <property type="molecule type" value="mRNA"/>
</dbReference>
<dbReference type="EMBL" id="U56236">
    <property type="protein sequence ID" value="AAB00566.1"/>
    <property type="molecule type" value="mRNA"/>
</dbReference>
<dbReference type="EMBL" id="U56237">
    <property type="protein sequence ID" value="AAB00567.1"/>
    <property type="molecule type" value="mRNA"/>
</dbReference>
<dbReference type="EMBL" id="S82919">
    <property type="protein sequence ID" value="AAD14421.1"/>
    <property type="molecule type" value="mRNA"/>
</dbReference>
<dbReference type="EMBL" id="D87853">
    <property type="protein sequence ID" value="BAA13471.1"/>
    <property type="molecule type" value="mRNA"/>
</dbReference>
<dbReference type="EMBL" id="D87854">
    <property type="protein sequence ID" value="BAA13472.1"/>
    <property type="molecule type" value="mRNA"/>
</dbReference>
<dbReference type="EMBL" id="D87855">
    <property type="protein sequence ID" value="BAA13473.1"/>
    <property type="molecule type" value="mRNA"/>
</dbReference>
<dbReference type="EMBL" id="D87856">
    <property type="protein sequence ID" value="BAA13474.1"/>
    <property type="molecule type" value="mRNA"/>
</dbReference>
<dbReference type="EMBL" id="D87857">
    <property type="protein sequence ID" value="BAA13475.1"/>
    <property type="molecule type" value="mRNA"/>
</dbReference>
<dbReference type="EMBL" id="D87859">
    <property type="protein sequence ID" value="BAA13477.1"/>
    <property type="molecule type" value="mRNA"/>
</dbReference>
<dbReference type="EMBL" id="D87861">
    <property type="protein sequence ID" value="BAA13479.1"/>
    <property type="molecule type" value="mRNA"/>
</dbReference>
<dbReference type="EMBL" id="D87862">
    <property type="protein sequence ID" value="BAA13480.1"/>
    <property type="molecule type" value="mRNA"/>
</dbReference>
<dbReference type="EMBL" id="DQ075334">
    <property type="protein sequence ID" value="AAZ76577.1"/>
    <property type="molecule type" value="mRNA"/>
</dbReference>
<dbReference type="EMBL" id="DQ075335">
    <property type="protein sequence ID" value="AAZ76578.1"/>
    <property type="molecule type" value="mRNA"/>
</dbReference>
<dbReference type="EMBL" id="DQ075336">
    <property type="protein sequence ID" value="AAZ76579.1"/>
    <property type="molecule type" value="mRNA"/>
</dbReference>
<dbReference type="EMBL" id="DQ075337">
    <property type="protein sequence ID" value="AAZ76580.1"/>
    <property type="molecule type" value="mRNA"/>
</dbReference>
<dbReference type="EMBL" id="DQ075338">
    <property type="protein sequence ID" value="AAZ76581.1"/>
    <property type="molecule type" value="mRNA"/>
</dbReference>
<dbReference type="EMBL" id="DQ075339">
    <property type="protein sequence ID" value="AAZ76582.1"/>
    <property type="molecule type" value="mRNA"/>
</dbReference>
<dbReference type="EMBL" id="AC011501">
    <property type="status" value="NOT_ANNOTATED_CDS"/>
    <property type="molecule type" value="Genomic_DNA"/>
</dbReference>
<dbReference type="EMBL" id="BC027953">
    <property type="protein sequence ID" value="AAH27953.1"/>
    <property type="molecule type" value="mRNA"/>
</dbReference>
<dbReference type="CCDS" id="CCDS12907.1">
    <molecule id="P24071-1"/>
</dbReference>
<dbReference type="CCDS" id="CCDS12908.1">
    <molecule id="P24071-3"/>
</dbReference>
<dbReference type="CCDS" id="CCDS12909.1">
    <molecule id="P24071-10"/>
</dbReference>
<dbReference type="CCDS" id="CCDS12910.1">
    <molecule id="P24071-7"/>
</dbReference>
<dbReference type="CCDS" id="CCDS42622.1">
    <molecule id="P24071-2"/>
</dbReference>
<dbReference type="CCDS" id="CCDS42623.1">
    <molecule id="P24071-11"/>
</dbReference>
<dbReference type="CCDS" id="CCDS42624.1">
    <molecule id="P24071-9"/>
</dbReference>
<dbReference type="CCDS" id="CCDS42625.1">
    <molecule id="P24071-8"/>
</dbReference>
<dbReference type="PIR" id="G02630">
    <property type="entry name" value="G02630"/>
</dbReference>
<dbReference type="PIR" id="JH0332">
    <property type="entry name" value="JH0332"/>
</dbReference>
<dbReference type="RefSeq" id="NP_001991.1">
    <molecule id="P24071-1"/>
    <property type="nucleotide sequence ID" value="NM_002000.4"/>
</dbReference>
<dbReference type="RefSeq" id="NP_579803.1">
    <molecule id="P24071-2"/>
    <property type="nucleotide sequence ID" value="NM_133269.4"/>
</dbReference>
<dbReference type="RefSeq" id="NP_579805.1">
    <molecule id="P24071-3"/>
    <property type="nucleotide sequence ID" value="NM_133271.4"/>
</dbReference>
<dbReference type="RefSeq" id="NP_579806.1">
    <molecule id="P24071-10"/>
    <property type="nucleotide sequence ID" value="NM_133272.4"/>
</dbReference>
<dbReference type="RefSeq" id="NP_579807.1">
    <molecule id="P24071-9"/>
    <property type="nucleotide sequence ID" value="NM_133273.4"/>
</dbReference>
<dbReference type="RefSeq" id="NP_579808.1">
    <molecule id="P24071-8"/>
    <property type="nucleotide sequence ID" value="NM_133274.4"/>
</dbReference>
<dbReference type="RefSeq" id="NP_579811.1">
    <molecule id="P24071-7"/>
    <property type="nucleotide sequence ID" value="NM_133277.4"/>
</dbReference>
<dbReference type="RefSeq" id="NP_579812.1">
    <molecule id="P24071-11"/>
    <property type="nucleotide sequence ID" value="NM_133278.4"/>
</dbReference>
<dbReference type="PDB" id="1OVZ">
    <property type="method" value="X-ray"/>
    <property type="resolution" value="3.00 A"/>
    <property type="chains" value="A/B=22-216"/>
</dbReference>
<dbReference type="PDB" id="1OW0">
    <property type="method" value="X-ray"/>
    <property type="resolution" value="3.10 A"/>
    <property type="chains" value="C/D=22-216"/>
</dbReference>
<dbReference type="PDB" id="1UCT">
    <property type="method" value="X-ray"/>
    <property type="resolution" value="2.10 A"/>
    <property type="chains" value="A=21-229"/>
</dbReference>
<dbReference type="PDB" id="8SKU">
    <property type="method" value="EM"/>
    <property type="resolution" value="3.20 A"/>
    <property type="chains" value="R/S=22-216"/>
</dbReference>
<dbReference type="PDBsum" id="1OVZ"/>
<dbReference type="PDBsum" id="1OW0"/>
<dbReference type="PDBsum" id="1UCT"/>
<dbReference type="PDBsum" id="8SKU"/>
<dbReference type="EMDB" id="EMD-40567"/>
<dbReference type="SMR" id="P24071"/>
<dbReference type="BioGRID" id="108498">
    <property type="interactions" value="7"/>
</dbReference>
<dbReference type="FunCoup" id="P24071">
    <property type="interactions" value="163"/>
</dbReference>
<dbReference type="IntAct" id="P24071">
    <property type="interactions" value="5"/>
</dbReference>
<dbReference type="STRING" id="9606.ENSP00000347714"/>
<dbReference type="GuidetoPHARMACOLOGY" id="2991"/>
<dbReference type="MEROPS" id="I43.951"/>
<dbReference type="GlyCosmos" id="P24071">
    <property type="glycosylation" value="5 sites, No reported glycans"/>
</dbReference>
<dbReference type="GlyGen" id="P24071">
    <property type="glycosylation" value="7 sites"/>
</dbReference>
<dbReference type="iPTMnet" id="P24071"/>
<dbReference type="PhosphoSitePlus" id="P24071"/>
<dbReference type="BioMuta" id="FCAR"/>
<dbReference type="DMDM" id="119860"/>
<dbReference type="jPOST" id="P24071"/>
<dbReference type="MassIVE" id="P24071"/>
<dbReference type="PaxDb" id="9606-ENSP00000347714"/>
<dbReference type="PeptideAtlas" id="P24071"/>
<dbReference type="ProteomicsDB" id="54181">
    <molecule id="P24071-1"/>
</dbReference>
<dbReference type="ProteomicsDB" id="54182">
    <molecule id="P24071-10"/>
</dbReference>
<dbReference type="ProteomicsDB" id="54183">
    <molecule id="P24071-11"/>
</dbReference>
<dbReference type="ProteomicsDB" id="54184">
    <molecule id="P24071-2"/>
</dbReference>
<dbReference type="ProteomicsDB" id="54185">
    <molecule id="P24071-3"/>
</dbReference>
<dbReference type="ProteomicsDB" id="54186">
    <molecule id="P24071-4"/>
</dbReference>
<dbReference type="ProteomicsDB" id="54187">
    <molecule id="P24071-5"/>
</dbReference>
<dbReference type="ProteomicsDB" id="54188">
    <molecule id="P24071-6"/>
</dbReference>
<dbReference type="ProteomicsDB" id="54189">
    <molecule id="P24071-7"/>
</dbReference>
<dbReference type="ProteomicsDB" id="54190">
    <molecule id="P24071-8"/>
</dbReference>
<dbReference type="ProteomicsDB" id="54191">
    <molecule id="P24071-9"/>
</dbReference>
<dbReference type="Antibodypedia" id="2709">
    <property type="antibodies" value="908 antibodies from 40 providers"/>
</dbReference>
<dbReference type="DNASU" id="2204"/>
<dbReference type="Ensembl" id="ENST00000345937.8">
    <molecule id="P24071-3"/>
    <property type="protein sequence ID" value="ENSP00000338257.4"/>
    <property type="gene ID" value="ENSG00000186431.19"/>
</dbReference>
<dbReference type="Ensembl" id="ENST00000353758.8">
    <molecule id="P24071-7"/>
    <property type="protein sequence ID" value="ENSP00000338058.4"/>
    <property type="gene ID" value="ENSG00000186431.19"/>
</dbReference>
<dbReference type="Ensembl" id="ENST00000355524.8">
    <molecule id="P24071-1"/>
    <property type="protein sequence ID" value="ENSP00000347714.3"/>
    <property type="gene ID" value="ENSG00000186431.19"/>
</dbReference>
<dbReference type="Ensembl" id="ENST00000359272.8">
    <molecule id="P24071-10"/>
    <property type="protein sequence ID" value="ENSP00000352218.4"/>
    <property type="gene ID" value="ENSG00000186431.19"/>
</dbReference>
<dbReference type="Ensembl" id="ENST00000391723.7">
    <molecule id="P24071-8"/>
    <property type="protein sequence ID" value="ENSP00000375603.3"/>
    <property type="gene ID" value="ENSG00000186431.19"/>
</dbReference>
<dbReference type="Ensembl" id="ENST00000391724.3">
    <molecule id="P24071-11"/>
    <property type="protein sequence ID" value="ENSP00000375604.3"/>
    <property type="gene ID" value="ENSG00000186431.19"/>
</dbReference>
<dbReference type="Ensembl" id="ENST00000391725.7">
    <molecule id="P24071-2"/>
    <property type="protein sequence ID" value="ENSP00000375605.3"/>
    <property type="gene ID" value="ENSG00000186431.19"/>
</dbReference>
<dbReference type="Ensembl" id="ENST00000391726.7">
    <molecule id="P24071-9"/>
    <property type="protein sequence ID" value="ENSP00000375606.3"/>
    <property type="gene ID" value="ENSG00000186431.19"/>
</dbReference>
<dbReference type="Ensembl" id="ENST00000469767.5">
    <molecule id="P24071-4"/>
    <property type="protein sequence ID" value="ENSP00000473814.1"/>
    <property type="gene ID" value="ENSG00000186431.19"/>
</dbReference>
<dbReference type="Ensembl" id="ENST00000488066.5">
    <molecule id="P24071-5"/>
    <property type="protein sequence ID" value="ENSP00000474512.1"/>
    <property type="gene ID" value="ENSG00000186431.19"/>
</dbReference>
<dbReference type="Ensembl" id="ENST00000610340.4">
    <molecule id="P24071-8"/>
    <property type="protein sequence ID" value="ENSP00000477610.1"/>
    <property type="gene ID" value="ENSG00000275136.4"/>
</dbReference>
<dbReference type="Ensembl" id="ENST00000610397.4">
    <molecule id="P24071-3"/>
    <property type="protein sequence ID" value="ENSP00000480965.1"/>
    <property type="gene ID" value="ENSG00000275269.4"/>
</dbReference>
<dbReference type="Ensembl" id="ENST00000610786.4">
    <molecule id="P24071-8"/>
    <property type="protein sequence ID" value="ENSP00000483121.1"/>
    <property type="gene ID" value="ENSG00000276858.4"/>
</dbReference>
<dbReference type="Ensembl" id="ENST00000611018.4">
    <molecule id="P24071-11"/>
    <property type="protein sequence ID" value="ENSP00000484483.1"/>
    <property type="gene ID" value="ENSG00000275970.4"/>
</dbReference>
<dbReference type="Ensembl" id="ENST00000611130.4">
    <molecule id="P24071-11"/>
    <property type="protein sequence ID" value="ENSP00000484917.1"/>
    <property type="gene ID" value="ENSG00000273738.4"/>
</dbReference>
<dbReference type="Ensembl" id="ENST00000611871.4">
    <molecule id="P24071-10"/>
    <property type="protein sequence ID" value="ENSP00000482976.1"/>
    <property type="gene ID" value="ENSG00000273738.4"/>
</dbReference>
<dbReference type="Ensembl" id="ENST00000611943.4">
    <molecule id="P24071-2"/>
    <property type="protein sequence ID" value="ENSP00000482273.1"/>
    <property type="gene ID" value="ENSG00000275564.4"/>
</dbReference>
<dbReference type="Ensembl" id="ENST00000612150.4">
    <molecule id="P24071-3"/>
    <property type="protein sequence ID" value="ENSP00000478233.1"/>
    <property type="gene ID" value="ENSG00000275136.4"/>
</dbReference>
<dbReference type="Ensembl" id="ENST00000612159.4">
    <molecule id="P24071-9"/>
    <property type="protein sequence ID" value="ENSP00000484662.1"/>
    <property type="gene ID" value="ENSG00000276985.4"/>
</dbReference>
<dbReference type="Ensembl" id="ENST00000612505.4">
    <molecule id="P24071-8"/>
    <property type="protein sequence ID" value="ENSP00000479792.1"/>
    <property type="gene ID" value="ENSG00000276985.4"/>
</dbReference>
<dbReference type="Ensembl" id="ENST00000612803.4">
    <molecule id="P24071-8"/>
    <property type="protein sequence ID" value="ENSP00000478454.1"/>
    <property type="gene ID" value="ENSG00000275970.4"/>
</dbReference>
<dbReference type="Ensembl" id="ENST00000612815.4">
    <molecule id="P24071-8"/>
    <property type="protein sequence ID" value="ENSP00000483503.1"/>
    <property type="gene ID" value="ENSG00000275269.4"/>
</dbReference>
<dbReference type="Ensembl" id="ENST00000612918.4">
    <molecule id="P24071-3"/>
    <property type="protein sequence ID" value="ENSP00000482056.1"/>
    <property type="gene ID" value="ENSG00000274580.4"/>
</dbReference>
<dbReference type="Ensembl" id="ENST00000613199.4">
    <molecule id="P24071-1"/>
    <property type="protein sequence ID" value="ENSP00000478465.1"/>
    <property type="gene ID" value="ENSG00000276858.4"/>
</dbReference>
<dbReference type="Ensembl" id="ENST00000613201.4">
    <molecule id="P24071-4"/>
    <property type="protein sequence ID" value="ENSP00000482108.1"/>
    <property type="gene ID" value="ENSG00000274580.4"/>
</dbReference>
<dbReference type="Ensembl" id="ENST00000613298.4">
    <molecule id="P24071-9"/>
    <property type="protein sequence ID" value="ENSP00000482451.1"/>
    <property type="gene ID" value="ENSG00000275269.4"/>
</dbReference>
<dbReference type="Ensembl" id="ENST00000613318.4">
    <molecule id="P24071-4"/>
    <property type="protein sequence ID" value="ENSP00000481560.1"/>
    <property type="gene ID" value="ENSG00000273738.4"/>
</dbReference>
<dbReference type="Ensembl" id="ENST00000613663.4">
    <molecule id="P24071-4"/>
    <property type="protein sequence ID" value="ENSP00000483437.1"/>
    <property type="gene ID" value="ENSG00000275564.4"/>
</dbReference>
<dbReference type="Ensembl" id="ENST00000613685.4">
    <molecule id="P24071-11"/>
    <property type="protein sequence ID" value="ENSP00000481230.1"/>
    <property type="gene ID" value="ENSG00000275564.4"/>
</dbReference>
<dbReference type="Ensembl" id="ENST00000614226.4">
    <molecule id="P24071-1"/>
    <property type="protein sequence ID" value="ENSP00000483099.1"/>
    <property type="gene ID" value="ENSG00000276985.4"/>
</dbReference>
<dbReference type="Ensembl" id="ENST00000614298.4">
    <molecule id="P24071-9"/>
    <property type="protein sequence ID" value="ENSP00000483472.1"/>
    <property type="gene ID" value="ENSG00000275970.4"/>
</dbReference>
<dbReference type="Ensembl" id="ENST00000614433.4">
    <molecule id="P24071-2"/>
    <property type="protein sequence ID" value="ENSP00000480748.1"/>
    <property type="gene ID" value="ENSG00000276985.4"/>
</dbReference>
<dbReference type="Ensembl" id="ENST00000614689.4">
    <molecule id="P24071-5"/>
    <property type="protein sequence ID" value="ENSP00000480013.1"/>
    <property type="gene ID" value="ENSG00000273738.4"/>
</dbReference>
<dbReference type="Ensembl" id="ENST00000614893.4">
    <molecule id="P24071-2"/>
    <property type="protein sequence ID" value="ENSP00000477966.1"/>
    <property type="gene ID" value="ENSG00000273738.4"/>
</dbReference>
<dbReference type="Ensembl" id="ENST00000614917.4">
    <molecule id="P24071-2"/>
    <property type="protein sequence ID" value="ENSP00000479831.1"/>
    <property type="gene ID" value="ENSG00000275970.4"/>
</dbReference>
<dbReference type="Ensembl" id="ENST00000614954.4">
    <molecule id="P24071-9"/>
    <property type="protein sequence ID" value="ENSP00000479924.1"/>
    <property type="gene ID" value="ENSG00000276858.4"/>
</dbReference>
<dbReference type="Ensembl" id="ENST00000615040.4">
    <molecule id="P24071-10"/>
    <property type="protein sequence ID" value="ENSP00000477656.1"/>
    <property type="gene ID" value="ENSG00000276858.4"/>
</dbReference>
<dbReference type="Ensembl" id="ENST00000615110.4">
    <molecule id="P24071-2"/>
    <property type="protein sequence ID" value="ENSP00000484276.1"/>
    <property type="gene ID" value="ENSG00000274580.4"/>
</dbReference>
<dbReference type="Ensembl" id="ENST00000615361.4">
    <molecule id="P24071-9"/>
    <property type="protein sequence ID" value="ENSP00000482741.1"/>
    <property type="gene ID" value="ENSG00000273738.4"/>
</dbReference>
<dbReference type="Ensembl" id="ENST00000615703.4">
    <molecule id="P24071-4"/>
    <property type="protein sequence ID" value="ENSP00000484868.1"/>
    <property type="gene ID" value="ENSG00000275136.4"/>
</dbReference>
<dbReference type="Ensembl" id="ENST00000615719.1">
    <molecule id="P24071-7"/>
    <property type="protein sequence ID" value="ENSP00000482518.1"/>
    <property type="gene ID" value="ENSG00000275136.4"/>
</dbReference>
<dbReference type="Ensembl" id="ENST00000615800.4">
    <molecule id="P24071-4"/>
    <property type="protein sequence ID" value="ENSP00000483841.1"/>
    <property type="gene ID" value="ENSG00000276985.4"/>
</dbReference>
<dbReference type="Ensembl" id="ENST00000615829.4">
    <molecule id="P24071-1"/>
    <property type="protein sequence ID" value="ENSP00000482623.1"/>
    <property type="gene ID" value="ENSG00000274580.4"/>
</dbReference>
<dbReference type="Ensembl" id="ENST00000615937.4">
    <molecule id="P24071-11"/>
    <property type="protein sequence ID" value="ENSP00000478075.1"/>
    <property type="gene ID" value="ENSG00000274580.4"/>
</dbReference>
<dbReference type="Ensembl" id="ENST00000616340.4">
    <molecule id="P24071-10"/>
    <property type="protein sequence ID" value="ENSP00000481676.1"/>
    <property type="gene ID" value="ENSG00000275269.4"/>
</dbReference>
<dbReference type="Ensembl" id="ENST00000616878.4">
    <molecule id="P24071-9"/>
    <property type="protein sequence ID" value="ENSP00000480970.1"/>
    <property type="gene ID" value="ENSG00000275136.4"/>
</dbReference>
<dbReference type="Ensembl" id="ENST00000616969.4">
    <molecule id="P24071-5"/>
    <property type="protein sequence ID" value="ENSP00000479039.1"/>
    <property type="gene ID" value="ENSG00000275564.4"/>
</dbReference>
<dbReference type="Ensembl" id="ENST00000617025.4">
    <molecule id="P24071-3"/>
    <property type="protein sequence ID" value="ENSP00000481129.1"/>
    <property type="gene ID" value="ENSG00000276985.4"/>
</dbReference>
<dbReference type="Ensembl" id="ENST00000617609.4">
    <molecule id="P24071-10"/>
    <property type="protein sequence ID" value="ENSP00000481394.1"/>
    <property type="gene ID" value="ENSG00000274580.4"/>
</dbReference>
<dbReference type="Ensembl" id="ENST00000617696.4">
    <molecule id="P24071-9"/>
    <property type="protein sequence ID" value="ENSP00000482670.1"/>
    <property type="gene ID" value="ENSG00000274580.4"/>
</dbReference>
<dbReference type="Ensembl" id="ENST00000617762.4">
    <molecule id="P24071-5"/>
    <property type="protein sequence ID" value="ENSP00000484136.1"/>
    <property type="gene ID" value="ENSG00000276858.4"/>
</dbReference>
<dbReference type="Ensembl" id="ENST00000617766.4">
    <molecule id="P24071-4"/>
    <property type="protein sequence ID" value="ENSP00000479230.1"/>
    <property type="gene ID" value="ENSG00000275269.4"/>
</dbReference>
<dbReference type="Ensembl" id="ENST00000617778.4">
    <molecule id="P24071-3"/>
    <property type="protein sequence ID" value="ENSP00000480498.1"/>
    <property type="gene ID" value="ENSG00000273738.4"/>
</dbReference>
<dbReference type="Ensembl" id="ENST00000617964.1">
    <molecule id="P24071-7"/>
    <property type="protein sequence ID" value="ENSP00000484141.1"/>
    <property type="gene ID" value="ENSG00000275564.4"/>
</dbReference>
<dbReference type="Ensembl" id="ENST00000618271.1">
    <molecule id="P24071-7"/>
    <property type="protein sequence ID" value="ENSP00000484741.1"/>
    <property type="gene ID" value="ENSG00000276985.4"/>
</dbReference>
<dbReference type="Ensembl" id="ENST00000618287.4">
    <molecule id="P24071-10"/>
    <property type="protein sequence ID" value="ENSP00000481668.1"/>
    <property type="gene ID" value="ENSG00000275564.4"/>
</dbReference>
<dbReference type="Ensembl" id="ENST00000618328.4">
    <molecule id="P24071-10"/>
    <property type="protein sequence ID" value="ENSP00000480496.1"/>
    <property type="gene ID" value="ENSG00000276985.4"/>
</dbReference>
<dbReference type="Ensembl" id="ENST00000618658.4">
    <molecule id="P24071-4"/>
    <property type="protein sequence ID" value="ENSP00000479688.1"/>
    <property type="gene ID" value="ENSG00000275970.4"/>
</dbReference>
<dbReference type="Ensembl" id="ENST00000618805.4">
    <molecule id="P24071-2"/>
    <property type="protein sequence ID" value="ENSP00000481985.1"/>
    <property type="gene ID" value="ENSG00000275269.4"/>
</dbReference>
<dbReference type="Ensembl" id="ENST00000618985.4">
    <molecule id="P24071-5"/>
    <property type="protein sequence ID" value="ENSP00000480323.1"/>
    <property type="gene ID" value="ENSG00000275269.4"/>
</dbReference>
<dbReference type="Ensembl" id="ENST00000619073.4">
    <molecule id="P24071-8"/>
    <property type="protein sequence ID" value="ENSP00000479360.1"/>
    <property type="gene ID" value="ENSG00000273738.4"/>
</dbReference>
<dbReference type="Ensembl" id="ENST00000619155.4">
    <molecule id="P24071-5"/>
    <property type="protein sequence ID" value="ENSP00000480461.1"/>
    <property type="gene ID" value="ENSG00000275970.4"/>
</dbReference>
<dbReference type="Ensembl" id="ENST00000619385.4">
    <molecule id="P24071-1"/>
    <property type="protein sequence ID" value="ENSP00000482334.1"/>
    <property type="gene ID" value="ENSG00000275269.4"/>
</dbReference>
<dbReference type="Ensembl" id="ENST00000619414.4">
    <molecule id="P24071-2"/>
    <property type="protein sequence ID" value="ENSP00000478163.1"/>
    <property type="gene ID" value="ENSG00000276858.4"/>
</dbReference>
<dbReference type="Ensembl" id="ENST00000619822.4">
    <molecule id="P24071-2"/>
    <property type="protein sequence ID" value="ENSP00000483250.1"/>
    <property type="gene ID" value="ENSG00000275136.4"/>
</dbReference>
<dbReference type="Ensembl" id="ENST00000620162.4">
    <molecule id="P24071-11"/>
    <property type="protein sequence ID" value="ENSP00000483258.1"/>
    <property type="gene ID" value="ENSG00000276858.4"/>
</dbReference>
<dbReference type="Ensembl" id="ENST00000620179.1">
    <molecule id="P24071-7"/>
    <property type="protein sequence ID" value="ENSP00000478315.1"/>
    <property type="gene ID" value="ENSG00000278415.4"/>
</dbReference>
<dbReference type="Ensembl" id="ENST00000620270.4">
    <molecule id="P24071-11"/>
    <property type="protein sequence ID" value="ENSP00000482022.1"/>
    <property type="gene ID" value="ENSG00000276985.4"/>
</dbReference>
<dbReference type="Ensembl" id="ENST00000620397.4">
    <molecule id="P24071-5"/>
    <property type="protein sequence ID" value="ENSP00000477584.1"/>
    <property type="gene ID" value="ENSG00000276985.4"/>
</dbReference>
<dbReference type="Ensembl" id="ENST00000620801.4">
    <molecule id="P24071-1"/>
    <property type="protein sequence ID" value="ENSP00000481195.1"/>
    <property type="gene ID" value="ENSG00000275970.4"/>
</dbReference>
<dbReference type="Ensembl" id="ENST00000620822.1">
    <molecule id="P24071-7"/>
    <property type="protein sequence ID" value="ENSP00000483327.1"/>
    <property type="gene ID" value="ENSG00000275269.4"/>
</dbReference>
<dbReference type="Ensembl" id="ENST00000620873.4">
    <molecule id="P24071-11"/>
    <property type="protein sequence ID" value="ENSP00000479099.1"/>
    <property type="gene ID" value="ENSG00000275269.4"/>
</dbReference>
<dbReference type="Ensembl" id="ENST00000621004.4">
    <molecule id="P24071-10"/>
    <property type="protein sequence ID" value="ENSP00000484816.1"/>
    <property type="gene ID" value="ENSG00000275970.4"/>
</dbReference>
<dbReference type="Ensembl" id="ENST00000621009.4">
    <molecule id="P24071-3"/>
    <property type="protein sequence ID" value="ENSP00000482025.1"/>
    <property type="gene ID" value="ENSG00000275970.4"/>
</dbReference>
<dbReference type="Ensembl" id="ENST00000621289.4">
    <molecule id="P24071-5"/>
    <property type="protein sequence ID" value="ENSP00000481366.1"/>
    <property type="gene ID" value="ENSG00000275136.4"/>
</dbReference>
<dbReference type="Ensembl" id="ENST00000621417.4">
    <molecule id="P24071-5"/>
    <property type="protein sequence ID" value="ENSP00000478634.1"/>
    <property type="gene ID" value="ENSG00000274580.4"/>
</dbReference>
<dbReference type="Ensembl" id="ENST00000621684.4">
    <molecule id="P24071-3"/>
    <property type="protein sequence ID" value="ENSP00000479239.1"/>
    <property type="gene ID" value="ENSG00000276858.4"/>
</dbReference>
<dbReference type="Ensembl" id="ENST00000621702.4">
    <molecule id="P24071-1"/>
    <property type="protein sequence ID" value="ENSP00000482807.1"/>
    <property type="gene ID" value="ENSG00000275136.4"/>
</dbReference>
<dbReference type="Ensembl" id="ENST00000621755.1">
    <molecule id="P24071-7"/>
    <property type="protein sequence ID" value="ENSP00000484906.1"/>
    <property type="gene ID" value="ENSG00000275970.4"/>
</dbReference>
<dbReference type="Ensembl" id="ENST00000621882.1">
    <molecule id="P24071-7"/>
    <property type="protein sequence ID" value="ENSP00000484272.1"/>
    <property type="gene ID" value="ENSG00000274580.4"/>
</dbReference>
<dbReference type="Ensembl" id="ENST00000622157.4">
    <molecule id="P24071-1"/>
    <property type="protein sequence ID" value="ENSP00000481502.1"/>
    <property type="gene ID" value="ENSG00000275564.4"/>
</dbReference>
<dbReference type="Ensembl" id="ENST00000622470.1">
    <molecule id="P24071-7"/>
    <property type="protein sequence ID" value="ENSP00000477673.1"/>
    <property type="gene ID" value="ENSG00000276858.4"/>
</dbReference>
<dbReference type="Ensembl" id="ENST00000622491.4">
    <molecule id="P24071-8"/>
    <property type="protein sequence ID" value="ENSP00000477643.1"/>
    <property type="gene ID" value="ENSG00000274580.4"/>
</dbReference>
<dbReference type="Ensembl" id="ENST00000622543.4">
    <molecule id="P24071-3"/>
    <property type="protein sequence ID" value="ENSP00000483402.1"/>
    <property type="gene ID" value="ENSG00000275564.4"/>
</dbReference>
<dbReference type="Ensembl" id="ENST00000622646.1">
    <molecule id="P24071-7"/>
    <property type="protein sequence ID" value="ENSP00000480406.1"/>
    <property type="gene ID" value="ENSG00000273738.4"/>
</dbReference>
<dbReference type="Ensembl" id="ENST00000622737.4">
    <molecule id="P24071-1"/>
    <property type="protein sequence ID" value="ENSP00000479738.1"/>
    <property type="gene ID" value="ENSG00000273738.4"/>
</dbReference>
<dbReference type="Ensembl" id="ENST00000622777.4">
    <molecule id="P24071-10"/>
    <property type="protein sequence ID" value="ENSP00000481345.1"/>
    <property type="gene ID" value="ENSG00000275136.4"/>
</dbReference>
<dbReference type="Ensembl" id="ENST00000622883.4">
    <molecule id="P24071-4"/>
    <property type="protein sequence ID" value="ENSP00000479880.1"/>
    <property type="gene ID" value="ENSG00000276858.4"/>
</dbReference>
<dbReference type="Ensembl" id="ENST00000622904.4">
    <molecule id="P24071-11"/>
    <property type="protein sequence ID" value="ENSP00000480444.1"/>
    <property type="gene ID" value="ENSG00000275136.4"/>
</dbReference>
<dbReference type="Ensembl" id="ENST00000638206.1">
    <molecule id="P24071-3"/>
    <property type="protein sequence ID" value="ENSP00000492749.1"/>
    <property type="gene ID" value="ENSG00000284061.2"/>
</dbReference>
<dbReference type="Ensembl" id="ENST00000638212.2">
    <molecule id="P24071-1"/>
    <property type="protein sequence ID" value="ENSP00000492230.1"/>
    <property type="gene ID" value="ENSG00000284061.2"/>
</dbReference>
<dbReference type="Ensembl" id="ENST00000638285.1">
    <molecule id="P24071-8"/>
    <property type="protein sequence ID" value="ENSP00000491595.1"/>
    <property type="gene ID" value="ENSG00000284061.2"/>
</dbReference>
<dbReference type="Ensembl" id="ENST00000638453.1">
    <molecule id="P24071-4"/>
    <property type="protein sequence ID" value="ENSP00000491493.1"/>
    <property type="gene ID" value="ENSG00000284061.2"/>
</dbReference>
<dbReference type="Ensembl" id="ENST00000639163.1">
    <molecule id="P24071-7"/>
    <property type="protein sequence ID" value="ENSP00000491556.1"/>
    <property type="gene ID" value="ENSG00000284061.2"/>
</dbReference>
<dbReference type="Ensembl" id="ENST00000639178.1">
    <molecule id="P24071-2"/>
    <property type="protein sequence ID" value="ENSP00000492137.1"/>
    <property type="gene ID" value="ENSG00000284061.2"/>
</dbReference>
<dbReference type="Ensembl" id="ENST00000639223.1">
    <molecule id="P24071-10"/>
    <property type="protein sequence ID" value="ENSP00000492274.1"/>
    <property type="gene ID" value="ENSG00000284061.2"/>
</dbReference>
<dbReference type="Ensembl" id="ENST00000639428.1">
    <molecule id="P24071-11"/>
    <property type="protein sequence ID" value="ENSP00000491642.1"/>
    <property type="gene ID" value="ENSG00000284061.2"/>
</dbReference>
<dbReference type="Ensembl" id="ENST00000639455.1">
    <molecule id="P24071-9"/>
    <property type="protein sequence ID" value="ENSP00000491849.1"/>
    <property type="gene ID" value="ENSG00000284061.2"/>
</dbReference>
<dbReference type="Ensembl" id="ENST00000640025.2">
    <molecule id="P24071-1"/>
    <property type="protein sequence ID" value="ENSP00000492529.2"/>
    <property type="gene ID" value="ENSG00000283750.3"/>
</dbReference>
<dbReference type="Ensembl" id="ENST00000640582.2">
    <molecule id="P24071-1"/>
    <property type="protein sequence ID" value="ENSP00000492447.1"/>
    <property type="gene ID" value="ENSG00000283750.3"/>
</dbReference>
<dbReference type="Ensembl" id="ENST00000640584.1">
    <molecule id="P24071-5"/>
    <property type="protein sequence ID" value="ENSP00000491818.1"/>
    <property type="gene ID" value="ENSG00000284061.2"/>
</dbReference>
<dbReference type="GeneID" id="2204"/>
<dbReference type="KEGG" id="hsa:2204"/>
<dbReference type="MANE-Select" id="ENST00000355524.8">
    <property type="protein sequence ID" value="ENSP00000347714.3"/>
    <property type="RefSeq nucleotide sequence ID" value="NM_002000.4"/>
    <property type="RefSeq protein sequence ID" value="NP_001991.1"/>
</dbReference>
<dbReference type="UCSC" id="uc002qhq.4">
    <molecule id="P24071-1"/>
    <property type="organism name" value="human"/>
</dbReference>
<dbReference type="AGR" id="HGNC:3608"/>
<dbReference type="CTD" id="2204"/>
<dbReference type="DisGeNET" id="2204"/>
<dbReference type="GeneCards" id="FCAR"/>
<dbReference type="HGNC" id="HGNC:3608">
    <property type="gene designation" value="FCAR"/>
</dbReference>
<dbReference type="HPA" id="ENSG00000186431">
    <property type="expression patterns" value="Tissue enhanced (bone marrow, lung, lymphoid tissue)"/>
</dbReference>
<dbReference type="MIM" id="147045">
    <property type="type" value="gene"/>
</dbReference>
<dbReference type="neXtProt" id="NX_P24071"/>
<dbReference type="OpenTargets" id="ENSG00000186431"/>
<dbReference type="PharmGKB" id="PA28055"/>
<dbReference type="VEuPathDB" id="HostDB:ENSG00000186431"/>
<dbReference type="eggNOG" id="ENOG502RCU0">
    <property type="taxonomic scope" value="Eukaryota"/>
</dbReference>
<dbReference type="GeneTree" id="ENSGT01100000263478"/>
<dbReference type="HOGENOM" id="CLU_021100_1_3_1"/>
<dbReference type="InParanoid" id="P24071"/>
<dbReference type="OMA" id="DHTTENW"/>
<dbReference type="OrthoDB" id="9837647at2759"/>
<dbReference type="PAN-GO" id="P24071">
    <property type="GO annotations" value="1 GO annotation based on evolutionary models"/>
</dbReference>
<dbReference type="PhylomeDB" id="P24071"/>
<dbReference type="TreeFam" id="TF336644"/>
<dbReference type="PathwayCommons" id="P24071"/>
<dbReference type="Reactome" id="R-HSA-6798695">
    <property type="pathway name" value="Neutrophil degranulation"/>
</dbReference>
<dbReference type="SignaLink" id="P24071"/>
<dbReference type="SIGNOR" id="P24071"/>
<dbReference type="BioGRID-ORCS" id="2204">
    <property type="hits" value="8 hits in 1141 CRISPR screens"/>
</dbReference>
<dbReference type="ChiTaRS" id="FCAR">
    <property type="organism name" value="human"/>
</dbReference>
<dbReference type="EvolutionaryTrace" id="P24071"/>
<dbReference type="GeneWiki" id="FCAR"/>
<dbReference type="GenomeRNAi" id="2204"/>
<dbReference type="Pharos" id="P24071">
    <property type="development level" value="Tbio"/>
</dbReference>
<dbReference type="PRO" id="PR:P24071"/>
<dbReference type="Proteomes" id="UP000005640">
    <property type="component" value="Chromosome 19"/>
</dbReference>
<dbReference type="RNAct" id="P24071">
    <property type="molecule type" value="protein"/>
</dbReference>
<dbReference type="Bgee" id="ENSG00000186431">
    <property type="expression patterns" value="Expressed in monocyte and 92 other cell types or tissues"/>
</dbReference>
<dbReference type="ExpressionAtlas" id="P24071">
    <property type="expression patterns" value="baseline and differential"/>
</dbReference>
<dbReference type="GO" id="GO:0005576">
    <property type="term" value="C:extracellular region"/>
    <property type="evidence" value="ECO:0007669"/>
    <property type="project" value="UniProtKB-SubCell"/>
</dbReference>
<dbReference type="GO" id="GO:0101003">
    <property type="term" value="C:ficolin-1-rich granule membrane"/>
    <property type="evidence" value="ECO:0000304"/>
    <property type="project" value="Reactome"/>
</dbReference>
<dbReference type="GO" id="GO:0005886">
    <property type="term" value="C:plasma membrane"/>
    <property type="evidence" value="ECO:0000314"/>
    <property type="project" value="CAFA"/>
</dbReference>
<dbReference type="GO" id="GO:0035579">
    <property type="term" value="C:specific granule membrane"/>
    <property type="evidence" value="ECO:0000304"/>
    <property type="project" value="Reactome"/>
</dbReference>
<dbReference type="GO" id="GO:0070821">
    <property type="term" value="C:tertiary granule membrane"/>
    <property type="evidence" value="ECO:0000304"/>
    <property type="project" value="Reactome"/>
</dbReference>
<dbReference type="GO" id="GO:0019862">
    <property type="term" value="F:IgA binding"/>
    <property type="evidence" value="ECO:0000314"/>
    <property type="project" value="CAFA"/>
</dbReference>
<dbReference type="GO" id="GO:0019766">
    <property type="term" value="F:IgA receptor activity"/>
    <property type="evidence" value="ECO:0000314"/>
    <property type="project" value="CAFA"/>
</dbReference>
<dbReference type="GO" id="GO:0097011">
    <property type="term" value="P:cellular response to granulocyte macrophage colony-stimulating factor stimulus"/>
    <property type="evidence" value="ECO:0000314"/>
    <property type="project" value="CAFA"/>
</dbReference>
<dbReference type="GO" id="GO:0035457">
    <property type="term" value="P:cellular response to interferon-alpha"/>
    <property type="evidence" value="ECO:0000314"/>
    <property type="project" value="CAFA"/>
</dbReference>
<dbReference type="GO" id="GO:0071354">
    <property type="term" value="P:cellular response to interleukin-6"/>
    <property type="evidence" value="ECO:0000314"/>
    <property type="project" value="CAFA"/>
</dbReference>
<dbReference type="GO" id="GO:0071222">
    <property type="term" value="P:cellular response to lipopolysaccharide"/>
    <property type="evidence" value="ECO:0000314"/>
    <property type="project" value="CAFA"/>
</dbReference>
<dbReference type="GO" id="GO:0071356">
    <property type="term" value="P:cellular response to tumor necrosis factor"/>
    <property type="evidence" value="ECO:0000314"/>
    <property type="project" value="CAFA"/>
</dbReference>
<dbReference type="GO" id="GO:0071346">
    <property type="term" value="P:cellular response to type II interferon"/>
    <property type="evidence" value="ECO:0000314"/>
    <property type="project" value="CAFA"/>
</dbReference>
<dbReference type="GO" id="GO:0038093">
    <property type="term" value="P:Fc receptor signaling pathway"/>
    <property type="evidence" value="ECO:0000314"/>
    <property type="project" value="CAFA"/>
</dbReference>
<dbReference type="GO" id="GO:0006955">
    <property type="term" value="P:immune response"/>
    <property type="evidence" value="ECO:0000304"/>
    <property type="project" value="ProtInc"/>
</dbReference>
<dbReference type="GO" id="GO:0002764">
    <property type="term" value="P:immune response-regulating signaling pathway"/>
    <property type="evidence" value="ECO:0000318"/>
    <property type="project" value="GO_Central"/>
</dbReference>
<dbReference type="GO" id="GO:0042119">
    <property type="term" value="P:neutrophil activation"/>
    <property type="evidence" value="ECO:0000314"/>
    <property type="project" value="CAFA"/>
</dbReference>
<dbReference type="GO" id="GO:0002446">
    <property type="term" value="P:neutrophil mediated immunity"/>
    <property type="evidence" value="ECO:0000314"/>
    <property type="project" value="CAFA"/>
</dbReference>
<dbReference type="GO" id="GO:0033031">
    <property type="term" value="P:positive regulation of neutrophil apoptotic process"/>
    <property type="evidence" value="ECO:0000314"/>
    <property type="project" value="CAFA"/>
</dbReference>
<dbReference type="CDD" id="cd05751">
    <property type="entry name" value="IgC2_D1_LILR_KIR_like"/>
    <property type="match status" value="1"/>
</dbReference>
<dbReference type="CDD" id="cd05711">
    <property type="entry name" value="IgC2_D2_LILR_KIR_like"/>
    <property type="match status" value="1"/>
</dbReference>
<dbReference type="DisProt" id="DP00311"/>
<dbReference type="FunFam" id="2.60.40.10:FF:001394">
    <property type="entry name" value="Immunoglobulin alpha Fc receptor"/>
    <property type="match status" value="1"/>
</dbReference>
<dbReference type="FunFam" id="2.60.40.10:FF:001793">
    <property type="entry name" value="Immunoglobulin alpha Fc receptor"/>
    <property type="match status" value="1"/>
</dbReference>
<dbReference type="Gene3D" id="2.60.40.10">
    <property type="entry name" value="Immunoglobulins"/>
    <property type="match status" value="2"/>
</dbReference>
<dbReference type="InterPro" id="IPR036179">
    <property type="entry name" value="Ig-like_dom_sf"/>
</dbReference>
<dbReference type="InterPro" id="IPR013783">
    <property type="entry name" value="Ig-like_fold"/>
</dbReference>
<dbReference type="InterPro" id="IPR050412">
    <property type="entry name" value="Ig-like_Receptors_ImmuneReg"/>
</dbReference>
<dbReference type="InterPro" id="IPR003599">
    <property type="entry name" value="Ig_sub"/>
</dbReference>
<dbReference type="InterPro" id="IPR013151">
    <property type="entry name" value="Immunoglobulin_dom"/>
</dbReference>
<dbReference type="PANTHER" id="PTHR11738:SF4">
    <property type="entry name" value="IMMUNOGLOBULIN ALPHA FC RECEPTOR"/>
    <property type="match status" value="1"/>
</dbReference>
<dbReference type="PANTHER" id="PTHR11738">
    <property type="entry name" value="MHC CLASS I NK CELL RECEPTOR"/>
    <property type="match status" value="1"/>
</dbReference>
<dbReference type="Pfam" id="PF00047">
    <property type="entry name" value="ig"/>
    <property type="match status" value="1"/>
</dbReference>
<dbReference type="SMART" id="SM00409">
    <property type="entry name" value="IG"/>
    <property type="match status" value="2"/>
</dbReference>
<dbReference type="SUPFAM" id="SSF48726">
    <property type="entry name" value="Immunoglobulin"/>
    <property type="match status" value="2"/>
</dbReference>
<gene>
    <name type="primary">FCAR</name>
    <name type="synonym">CD89</name>
</gene>
<accession>P24071</accession>
<accession>Q13603</accession>
<accession>Q13604</accession>
<accession>Q15727</accession>
<accession>Q15728</accession>
<accession>Q1AJL7</accession>
<accession>Q1AJL8</accession>
<accession>Q1AJL9</accession>
<accession>Q53X38</accession>
<accession>Q53X39</accession>
<accession>Q92587</accession>
<accession>Q92588</accession>
<accession>Q92590</accession>
<accession>Q92592</accession>
<accession>Q92593</accession>
<accession>Q9UEK0</accession>
<feature type="signal peptide" evidence="1">
    <location>
        <begin position="1"/>
        <end position="21"/>
    </location>
</feature>
<feature type="chain" id="PRO_0000015138" description="Immunoglobulin alpha Fc receptor">
    <location>
        <begin position="22"/>
        <end position="287"/>
    </location>
</feature>
<feature type="topological domain" description="Extracellular" evidence="1">
    <location>
        <begin position="22"/>
        <end position="227"/>
    </location>
</feature>
<feature type="transmembrane region" description="Helical" evidence="1">
    <location>
        <begin position="228"/>
        <end position="246"/>
    </location>
</feature>
<feature type="topological domain" description="Cytoplasmic" evidence="1">
    <location>
        <begin position="247"/>
        <end position="287"/>
    </location>
</feature>
<feature type="domain" description="Ig-like C2-type 1">
    <location>
        <begin position="42"/>
        <end position="107"/>
    </location>
</feature>
<feature type="domain" description="Ig-like C2-type 2">
    <location>
        <begin position="139"/>
        <end position="200"/>
    </location>
</feature>
<feature type="glycosylation site" description="N-linked (GlcNAc...) asparagine" evidence="1">
    <location>
        <position position="65"/>
    </location>
</feature>
<feature type="glycosylation site" description="N-linked (GlcNAc...) asparagine" evidence="1">
    <location>
        <position position="79"/>
    </location>
</feature>
<feature type="glycosylation site" description="N-linked (GlcNAc...) asparagine" evidence="2">
    <location>
        <position position="141"/>
    </location>
</feature>
<feature type="glycosylation site" description="N-linked (GlcNAc...) asparagine" evidence="2">
    <location>
        <position position="177"/>
    </location>
</feature>
<feature type="glycosylation site" description="N-linked (GlcNAc...) asparagine" evidence="1">
    <location>
        <position position="186"/>
    </location>
</feature>
<feature type="disulfide bond" evidence="2 3 13 14 15">
    <location>
        <begin position="49"/>
        <end position="100"/>
    </location>
</feature>
<feature type="disulfide bond" evidence="2 3 13 14 15">
    <location>
        <begin position="146"/>
        <end position="193"/>
    </location>
</feature>
<feature type="splice variant" id="VSP_002632" description="In isoform B-delta-S2, isoform L10, isoform U09, isoform U10, isoform U11 and isoform U13." evidence="11">
    <location>
        <begin position="12"/>
        <end position="23"/>
    </location>
</feature>
<feature type="splice variant" id="VSP_043565" description="In isoform L10." evidence="11">
    <location>
        <begin position="24"/>
        <end position="120"/>
    </location>
</feature>
<feature type="splice variant" id="VSP_002633" description="In isoform U02." evidence="11">
    <original>G</original>
    <variation>GRYISEHFWCRSLGCNPVNDASAQRPG</variation>
    <location>
        <position position="24"/>
    </location>
</feature>
<feature type="splice variant" id="VSP_043566" description="In isoform U10." evidence="11">
    <location>
        <begin position="115"/>
        <end position="210"/>
    </location>
</feature>
<feature type="splice variant" id="VSP_002634" description="In isoform A.3." evidence="9 10 11">
    <location>
        <begin position="121"/>
        <end position="216"/>
    </location>
</feature>
<feature type="splice variant" id="VSP_043567" description="In isoform U09." evidence="11">
    <original>CYGWYNRSPYLWSFPSNALELVVTDSIHQDYTTQNLIRMAVAGLVLVALLAILVENWHSHTALNKEASADVAEPSWSQQMCQPGLTFARTPSVCK</original>
    <variation>LHPPRLHDAELDPHGRGRTGPRGSLGHTG</variation>
    <location>
        <begin position="193"/>
        <end position="287"/>
    </location>
</feature>
<feature type="splice variant" id="VSP_002635" description="In isoform A.2, isoform U02 and isoform U13." evidence="9 11">
    <location>
        <begin position="195"/>
        <end position="216"/>
    </location>
</feature>
<feature type="splice variant" id="VSP_002636" description="In isoform B and isoform B-delta-S2." evidence="12">
    <original>DSIHQDYTTQNLIRMAVAGLVLVALLAILVENWHSHTALNKEASADVAEPSWSQQMCQPGLTFARTPSVCK</original>
    <variation>GRYRPVQPCVWVGCPGPCHRAGI</variation>
    <location>
        <begin position="217"/>
        <end position="287"/>
    </location>
</feature>
<feature type="sequence variant" id="VAR_049996" description="In dbSNP:rs11666735." evidence="4">
    <original>D</original>
    <variation>N</variation>
    <location>
        <position position="113"/>
    </location>
</feature>
<feature type="sequence variant" id="VAR_049997" description="In dbSNP:rs16986050." evidence="4">
    <original>S</original>
    <variation>G</variation>
    <location>
        <position position="269"/>
    </location>
</feature>
<feature type="helix" evidence="17">
    <location>
        <begin position="23"/>
        <end position="25"/>
    </location>
</feature>
<feature type="strand" evidence="17">
    <location>
        <begin position="31"/>
        <end position="35"/>
    </location>
</feature>
<feature type="strand" evidence="17">
    <location>
        <begin position="37"/>
        <end position="40"/>
    </location>
</feature>
<feature type="strand" evidence="17">
    <location>
        <begin position="45"/>
        <end position="49"/>
    </location>
</feature>
<feature type="strand" evidence="17">
    <location>
        <begin position="56"/>
        <end position="64"/>
    </location>
</feature>
<feature type="strand" evidence="17">
    <location>
        <begin position="67"/>
        <end position="70"/>
    </location>
</feature>
<feature type="strand" evidence="17">
    <location>
        <begin position="72"/>
        <end position="74"/>
    </location>
</feature>
<feature type="strand" evidence="16">
    <location>
        <begin position="77"/>
        <end position="79"/>
    </location>
</feature>
<feature type="strand" evidence="17">
    <location>
        <begin position="84"/>
        <end position="87"/>
    </location>
</feature>
<feature type="helix" evidence="17">
    <location>
        <begin position="92"/>
        <end position="94"/>
    </location>
</feature>
<feature type="strand" evidence="17">
    <location>
        <begin position="96"/>
        <end position="104"/>
    </location>
</feature>
<feature type="turn" evidence="17">
    <location>
        <begin position="105"/>
        <end position="107"/>
    </location>
</feature>
<feature type="strand" evidence="17">
    <location>
        <begin position="108"/>
        <end position="111"/>
    </location>
</feature>
<feature type="strand" evidence="17">
    <location>
        <begin position="115"/>
        <end position="120"/>
    </location>
</feature>
<feature type="strand" evidence="17">
    <location>
        <begin position="127"/>
        <end position="132"/>
    </location>
</feature>
<feature type="strand" evidence="17">
    <location>
        <begin position="134"/>
        <end position="136"/>
    </location>
</feature>
<feature type="strand" evidence="17">
    <location>
        <begin position="143"/>
        <end position="147"/>
    </location>
</feature>
<feature type="strand" evidence="17">
    <location>
        <begin position="149"/>
        <end position="151"/>
    </location>
</feature>
<feature type="strand" evidence="17">
    <location>
        <begin position="154"/>
        <end position="160"/>
    </location>
</feature>
<feature type="strand" evidence="17">
    <location>
        <begin position="168"/>
        <end position="171"/>
    </location>
</feature>
<feature type="strand" evidence="17">
    <location>
        <begin position="173"/>
        <end position="179"/>
    </location>
</feature>
<feature type="helix" evidence="17">
    <location>
        <begin position="185"/>
        <end position="187"/>
    </location>
</feature>
<feature type="strand" evidence="17">
    <location>
        <begin position="189"/>
        <end position="196"/>
    </location>
</feature>
<feature type="strand" evidence="16">
    <location>
        <begin position="198"/>
        <end position="200"/>
    </location>
</feature>
<feature type="strand" evidence="17">
    <location>
        <begin position="211"/>
        <end position="215"/>
    </location>
</feature>
<comment type="function">
    <text evidence="2">Binds to the Fc region of immunoglobulins alpha. Mediates several functions including cytokine production.</text>
</comment>
<comment type="subunit">
    <text evidence="2 6">Associates with the Fc epsilon RI gamma 2 receptor inducing tyrosine phosphorylation of gamma 2.</text>
</comment>
<comment type="subunit">
    <text evidence="5">(Microbial infection) Interacts with Staphylococcus aureus protein SSL11.</text>
</comment>
<comment type="subcellular location">
    <molecule>Isoform A.1</molecule>
    <subcellularLocation>
        <location>Cell membrane</location>
        <topology>Single-pass type I membrane protein</topology>
    </subcellularLocation>
</comment>
<comment type="subcellular location">
    <molecule>Isoform A.2</molecule>
    <subcellularLocation>
        <location>Cell membrane</location>
        <topology>Single-pass type I membrane protein</topology>
    </subcellularLocation>
</comment>
<comment type="subcellular location">
    <molecule>Isoform A.3</molecule>
    <subcellularLocation>
        <location>Cell membrane</location>
        <topology>Single-pass type I membrane protein</topology>
    </subcellularLocation>
</comment>
<comment type="subcellular location">
    <molecule>Isoform B</molecule>
    <subcellularLocation>
        <location>Secreted</location>
    </subcellularLocation>
</comment>
<comment type="subcellular location">
    <molecule>Isoform B-delta-S2</molecule>
    <subcellularLocation>
        <location>Secreted</location>
    </subcellularLocation>
</comment>
<comment type="alternative products">
    <event type="alternative splicing"/>
    <isoform>
        <id>P24071-1</id>
        <name>A.1</name>
        <sequence type="displayed"/>
    </isoform>
    <isoform>
        <id>P24071-2</id>
        <name>A.2</name>
        <sequence type="described" ref="VSP_002635"/>
    </isoform>
    <isoform>
        <id>P24071-3</id>
        <name>A.3</name>
        <name>RLA2</name>
        <sequence type="described" ref="VSP_002634"/>
    </isoform>
    <isoform>
        <id>P24071-4</id>
        <name>B</name>
        <sequence type="described" ref="VSP_002636"/>
    </isoform>
    <isoform>
        <id>P24071-5</id>
        <name>B-delta-S2</name>
        <sequence type="described" ref="VSP_002632 VSP_002636"/>
    </isoform>
    <isoform>
        <id>P24071-6</id>
        <name>U02</name>
        <sequence type="described" ref="VSP_002633 VSP_002635"/>
    </isoform>
    <isoform>
        <id>P24071-7</id>
        <name>L10</name>
        <sequence type="described" ref="VSP_002632 VSP_043565"/>
    </isoform>
    <isoform>
        <id>P24071-8</id>
        <name>U09</name>
        <sequence type="described" ref="VSP_002632 VSP_043567"/>
    </isoform>
    <isoform>
        <id>P24071-9</id>
        <name>U10</name>
        <sequence type="described" ref="VSP_002632 VSP_043566"/>
    </isoform>
    <isoform>
        <id>P24071-10</id>
        <name>U11</name>
        <sequence type="described" ref="VSP_002632"/>
    </isoform>
    <isoform>
        <id>P24071-11</id>
        <name>U13</name>
        <sequence type="described" ref="VSP_002632 VSP_002635"/>
    </isoform>
    <text>Additional isoforms seem to exist.</text>
</comment>
<comment type="tissue specificity">
    <text evidence="7 8">Isoform A.1, isoform A.2 and isoform A.3 are differentially expressed between blood and mucosal myeloid cells. Isoform A.1, isoform A.2 and isoform A.3 are expressed in monocytes. Isoform A.1 and isoform A.2 are expressed in alveolar macrophages; however only one isoform is expressed at alveolar macrophages surfaces.</text>
</comment>
<comment type="miscellaneous">
    <molecule>Isoform B-delta-S2</molecule>
    <text evidence="12">May be produced at very low levels due to a premature stop codon in the mRNA, leading to nonsense-mediated mRNA decay.</text>
</comment>
<evidence type="ECO:0000255" key="1"/>
<evidence type="ECO:0000269" key="2">
    <source>
    </source>
</evidence>
<evidence type="ECO:0000269" key="3">
    <source>
    </source>
</evidence>
<evidence type="ECO:0000269" key="4">
    <source>
    </source>
</evidence>
<evidence type="ECO:0000269" key="5">
    <source>
    </source>
</evidence>
<evidence type="ECO:0000269" key="6">
    <source>
    </source>
</evidence>
<evidence type="ECO:0000269" key="7">
    <source>
    </source>
</evidence>
<evidence type="ECO:0000269" key="8">
    <source>
    </source>
</evidence>
<evidence type="ECO:0000303" key="9">
    <source>
    </source>
</evidence>
<evidence type="ECO:0000303" key="10">
    <source>
    </source>
</evidence>
<evidence type="ECO:0000303" key="11">
    <source>
    </source>
</evidence>
<evidence type="ECO:0000305" key="12"/>
<evidence type="ECO:0007744" key="13">
    <source>
        <dbReference type="PDB" id="1OVZ"/>
    </source>
</evidence>
<evidence type="ECO:0007744" key="14">
    <source>
        <dbReference type="PDB" id="1OW0"/>
    </source>
</evidence>
<evidence type="ECO:0007744" key="15">
    <source>
        <dbReference type="PDB" id="1UCT"/>
    </source>
</evidence>
<evidence type="ECO:0007829" key="16">
    <source>
        <dbReference type="PDB" id="1OVZ"/>
    </source>
</evidence>
<evidence type="ECO:0007829" key="17">
    <source>
        <dbReference type="PDB" id="1UCT"/>
    </source>
</evidence>
<sequence length="287" mass="32265">MDPKQTTLLCLVLCLGQRIQAQEGDFPMPFISAKSSPVIPLDGSVKIQCQAIREAYLTQLMIIKNSTYREIGRRLKFWNETDPEFVIDHMDANKAGRYQCQYRIGHYRFRYSDTLELVVTGLYGKPFLSADRGLVLMPGENISLTCSSAHIPFDRFSLAKEGELSLPQHQSGEHPANFSLGPVDLNVSGIYRCYGWYNRSPYLWSFPSNALELVVTDSIHQDYTTQNLIRMAVAGLVLVALLAILVENWHSHTALNKEASADVAEPSWSQQMCQPGLTFARTPSVCK</sequence>
<name>FCAR_HUMAN</name>
<protein>
    <recommendedName>
        <fullName>Immunoglobulin alpha Fc receptor</fullName>
        <shortName>IgA Fc receptor</shortName>
    </recommendedName>
    <cdAntigenName>CD89</cdAntigenName>
</protein>
<keyword id="KW-0002">3D-structure</keyword>
<keyword id="KW-0025">Alternative splicing</keyword>
<keyword id="KW-1003">Cell membrane</keyword>
<keyword id="KW-1015">Disulfide bond</keyword>
<keyword id="KW-0325">Glycoprotein</keyword>
<keyword id="KW-0388">IgA-binding protein</keyword>
<keyword id="KW-0393">Immunoglobulin domain</keyword>
<keyword id="KW-0472">Membrane</keyword>
<keyword id="KW-1267">Proteomics identification</keyword>
<keyword id="KW-0675">Receptor</keyword>
<keyword id="KW-1185">Reference proteome</keyword>
<keyword id="KW-0677">Repeat</keyword>
<keyword id="KW-0964">Secreted</keyword>
<keyword id="KW-0732">Signal</keyword>
<keyword id="KW-0812">Transmembrane</keyword>
<keyword id="KW-1133">Transmembrane helix</keyword>